<sequence>MSAAKNEMYYSLLEWFKTLNLNAPHADAESLADGVAVAQALNQFAPESFTDSWLAKIKASAVGINWRLRMSNLKKVTQSLYDYYSEVLNYTLSDFVKPDVQRIAEKCDLVELERLLQLVLGCAVNCAKKQSYITEIMCLEEELQANIMRALQELESSRNAAEGGIVTSLSRSSISGMLDGKVLQEERDAMAQKCFETEKKMLLLIDEKTNLQQELQRVQKEFARLEHSSTVIGDDGVSLGPVQTGSVRYNELRRQLDLLKEELLQSEGAREDLKLKAQQQETDLWHMQMRIDELLKSTAEVTTLKDEVDVLRESNDKLKICEGQLDTYKKKLEDYNDLKKQVKILEERSADYVQQNAQFEEDAKRYANTKGQIELFKKEIQDLHTKLDSESSKNVKLEFDNKNLEGKNLALQRAKDSLLKERDNLRETVDELKCGHLSSNSGLTGTTVSRELQPPATVEKMQRLEAENKALREGQGGQTALAQLLDDANKRCENLREQLKTANERILSLSHASQSDDPILKESEFGKQIKQLMELNEQKTLQLEESVTQSSSLQCKVTQLETNLTAREQEVMAYDAKYRKCLEKAKEVIKSFDPRIASAIDASALEKYFDVVEEEPKPKMSVMEEQLMTSAFYRLGVNAQRDAVDSKLAILMGSGQTFLARQRQSAPRKSLSAMKSK</sequence>
<dbReference type="EMBL" id="CH479180">
    <property type="protein sequence ID" value="EDW28511.1"/>
    <property type="status" value="ALT_SEQ"/>
    <property type="molecule type" value="Genomic_DNA"/>
</dbReference>
<dbReference type="RefSeq" id="XP_002014515.1">
    <property type="nucleotide sequence ID" value="XM_002014479.1"/>
</dbReference>
<dbReference type="SMR" id="B4G831"/>
<dbReference type="STRING" id="7234.B4G831"/>
<dbReference type="eggNOG" id="ENOG502QQM8">
    <property type="taxonomic scope" value="Eukaryota"/>
</dbReference>
<dbReference type="OrthoDB" id="49395at2759"/>
<dbReference type="Proteomes" id="UP000008744">
    <property type="component" value="Unassembled WGS sequence"/>
</dbReference>
<dbReference type="GO" id="GO:0005813">
    <property type="term" value="C:centrosome"/>
    <property type="evidence" value="ECO:0007669"/>
    <property type="project" value="TreeGrafter"/>
</dbReference>
<dbReference type="GO" id="GO:0005768">
    <property type="term" value="C:endosome"/>
    <property type="evidence" value="ECO:0000250"/>
    <property type="project" value="UniProtKB"/>
</dbReference>
<dbReference type="GO" id="GO:0005874">
    <property type="term" value="C:microtubule"/>
    <property type="evidence" value="ECO:0007669"/>
    <property type="project" value="UniProtKB-KW"/>
</dbReference>
<dbReference type="GO" id="GO:0045202">
    <property type="term" value="C:synapse"/>
    <property type="evidence" value="ECO:0000250"/>
    <property type="project" value="UniProtKB"/>
</dbReference>
<dbReference type="GO" id="GO:0051959">
    <property type="term" value="F:dynein light intermediate chain binding"/>
    <property type="evidence" value="ECO:0007669"/>
    <property type="project" value="TreeGrafter"/>
</dbReference>
<dbReference type="GO" id="GO:0008017">
    <property type="term" value="F:microtubule binding"/>
    <property type="evidence" value="ECO:0000250"/>
    <property type="project" value="UniProtKB"/>
</dbReference>
<dbReference type="GO" id="GO:0031267">
    <property type="term" value="F:small GTPase binding"/>
    <property type="evidence" value="ECO:0007669"/>
    <property type="project" value="EnsemblMetazoa"/>
</dbReference>
<dbReference type="GO" id="GO:0031122">
    <property type="term" value="P:cytoplasmic microtubule organization"/>
    <property type="evidence" value="ECO:0007669"/>
    <property type="project" value="InterPro"/>
</dbReference>
<dbReference type="GO" id="GO:0030705">
    <property type="term" value="P:cytoskeleton-dependent intracellular transport"/>
    <property type="evidence" value="ECO:0000250"/>
    <property type="project" value="UniProtKB"/>
</dbReference>
<dbReference type="GO" id="GO:0008340">
    <property type="term" value="P:determination of adult lifespan"/>
    <property type="evidence" value="ECO:0000250"/>
    <property type="project" value="UniProtKB"/>
</dbReference>
<dbReference type="GO" id="GO:0006897">
    <property type="term" value="P:endocytosis"/>
    <property type="evidence" value="ECO:0000250"/>
    <property type="project" value="UniProtKB"/>
</dbReference>
<dbReference type="CDD" id="cd22222">
    <property type="entry name" value="HkD_Hook"/>
    <property type="match status" value="1"/>
</dbReference>
<dbReference type="FunFam" id="1.10.418.10:FF:000024">
    <property type="entry name" value="Hook homolog 3 (Drosophila)"/>
    <property type="match status" value="1"/>
</dbReference>
<dbReference type="Gene3D" id="1.10.418.10">
    <property type="entry name" value="Calponin-like domain"/>
    <property type="match status" value="1"/>
</dbReference>
<dbReference type="InterPro" id="IPR001715">
    <property type="entry name" value="CH_dom"/>
</dbReference>
<dbReference type="InterPro" id="IPR036872">
    <property type="entry name" value="CH_dom_sf"/>
</dbReference>
<dbReference type="InterPro" id="IPR008636">
    <property type="entry name" value="Hook_C"/>
</dbReference>
<dbReference type="InterPro" id="IPR043936">
    <property type="entry name" value="HOOK_N"/>
</dbReference>
<dbReference type="PANTHER" id="PTHR18947">
    <property type="entry name" value="HOOK PROTEINS"/>
    <property type="match status" value="1"/>
</dbReference>
<dbReference type="PANTHER" id="PTHR18947:SF39">
    <property type="entry name" value="PROTEIN HOOK"/>
    <property type="match status" value="1"/>
</dbReference>
<dbReference type="Pfam" id="PF05622">
    <property type="entry name" value="HOOK"/>
    <property type="match status" value="1"/>
</dbReference>
<dbReference type="Pfam" id="PF19047">
    <property type="entry name" value="HOOK_N"/>
    <property type="match status" value="1"/>
</dbReference>
<dbReference type="SUPFAM" id="SSF116907">
    <property type="entry name" value="Hook domain"/>
    <property type="match status" value="1"/>
</dbReference>
<dbReference type="PROSITE" id="PS50021">
    <property type="entry name" value="CH"/>
    <property type="match status" value="1"/>
</dbReference>
<name>HOOK_DROPE</name>
<accession>B4G831</accession>
<comment type="function">
    <text evidence="1">Involved in endocytic trafficking by stabilizing organelles of the endocytic pathway. Probably acts as a cytoskeletal linker protein required to tether endosome vesicles to the cytoskeleton. Involved in modulation of endocytosis at stages required for down-regulation of membrane proteins that control synapse size. Not involved in synaptic vesicle recycling. Required in R7 cells for boss endocytosis into multivesicular bodies (MVBs). Has a role in regulating adult longevity.</text>
</comment>
<comment type="subunit">
    <text evidence="1">Homodimer. Interacts with microtubules via its N-terminus.</text>
</comment>
<comment type="subcellular location">
    <subcellularLocation>
        <location evidence="1">Cytoplasm</location>
        <location evidence="1">Cytoskeleton</location>
    </subcellularLocation>
    <subcellularLocation>
        <location evidence="1">Endosome</location>
    </subcellularLocation>
    <subcellularLocation>
        <location evidence="1">Synapse</location>
    </subcellularLocation>
    <text evidence="1">Enriched at neuromuscular synapses, in both presynaptic and postsynaptic regions.</text>
</comment>
<comment type="domain">
    <text evidence="1">The coiled coil domain mediates homodimerization.</text>
</comment>
<comment type="similarity">
    <text evidence="4">Belongs to the hook family.</text>
</comment>
<comment type="sequence caution" evidence="4">
    <conflict type="erroneous gene model prediction">
        <sequence resource="EMBL-CDS" id="EDW28511"/>
    </conflict>
</comment>
<comment type="sequence caution" evidence="4">
    <conflict type="frameshift">
        <sequence resource="EMBL-CDS" id="EDW28511"/>
    </conflict>
</comment>
<keyword id="KW-0175">Coiled coil</keyword>
<keyword id="KW-0963">Cytoplasm</keyword>
<keyword id="KW-0206">Cytoskeleton</keyword>
<keyword id="KW-0217">Developmental protein</keyword>
<keyword id="KW-0254">Endocytosis</keyword>
<keyword id="KW-0967">Endosome</keyword>
<keyword id="KW-0493">Microtubule</keyword>
<keyword id="KW-1185">Reference proteome</keyword>
<keyword id="KW-0770">Synapse</keyword>
<organism>
    <name type="scientific">Drosophila persimilis</name>
    <name type="common">Fruit fly</name>
    <dbReference type="NCBI Taxonomy" id="7234"/>
    <lineage>
        <taxon>Eukaryota</taxon>
        <taxon>Metazoa</taxon>
        <taxon>Ecdysozoa</taxon>
        <taxon>Arthropoda</taxon>
        <taxon>Hexapoda</taxon>
        <taxon>Insecta</taxon>
        <taxon>Pterygota</taxon>
        <taxon>Neoptera</taxon>
        <taxon>Endopterygota</taxon>
        <taxon>Diptera</taxon>
        <taxon>Brachycera</taxon>
        <taxon>Muscomorpha</taxon>
        <taxon>Ephydroidea</taxon>
        <taxon>Drosophilidae</taxon>
        <taxon>Drosophila</taxon>
        <taxon>Sophophora</taxon>
    </lineage>
</organism>
<protein>
    <recommendedName>
        <fullName>Protein hook</fullName>
    </recommendedName>
</protein>
<reference key="1">
    <citation type="journal article" date="2007" name="Nature">
        <title>Evolution of genes and genomes on the Drosophila phylogeny.</title>
        <authorList>
            <consortium name="Drosophila 12 genomes consortium"/>
        </authorList>
    </citation>
    <scope>NUCLEOTIDE SEQUENCE [LARGE SCALE GENOMIC DNA]</scope>
    <source>
        <strain>MSH-3 / Tucson 14011-0111.49</strain>
    </source>
</reference>
<proteinExistence type="inferred from homology"/>
<gene>
    <name evidence="1" type="primary">hook</name>
    <name evidence="1" type="synonym">hk</name>
    <name type="ORF">GL19224</name>
</gene>
<feature type="chain" id="PRO_0000379066" description="Protein hook">
    <location>
        <begin position="1"/>
        <end position="677"/>
    </location>
</feature>
<feature type="domain" description="Calponin-homology (CH)" evidence="3">
    <location>
        <begin position="6"/>
        <end position="123"/>
    </location>
</feature>
<feature type="coiled-coil region" evidence="2">
    <location>
        <begin position="135"/>
        <end position="436"/>
    </location>
</feature>
<feature type="coiled-coil region" evidence="2">
    <location>
        <begin position="478"/>
        <end position="588"/>
    </location>
</feature>
<evidence type="ECO:0000250" key="1">
    <source>
        <dbReference type="UniProtKB" id="Q24185"/>
    </source>
</evidence>
<evidence type="ECO:0000255" key="2"/>
<evidence type="ECO:0000255" key="3">
    <source>
        <dbReference type="PROSITE-ProRule" id="PRU00044"/>
    </source>
</evidence>
<evidence type="ECO:0000305" key="4"/>